<proteinExistence type="inferred from homology"/>
<comment type="function">
    <text evidence="1">Probably phosphorylates lipids; the in vivo substrate is unknown.</text>
</comment>
<comment type="cofactor">
    <cofactor evidence="1">
        <name>Mg(2+)</name>
        <dbReference type="ChEBI" id="CHEBI:18420"/>
    </cofactor>
    <cofactor evidence="1">
        <name>Ca(2+)</name>
        <dbReference type="ChEBI" id="CHEBI:29108"/>
    </cofactor>
    <text evidence="1">Binds 1 Mg(2+) ion per subunit. Ca(2+) may be able to substitute.</text>
</comment>
<comment type="subcellular location">
    <subcellularLocation>
        <location evidence="1">Cytoplasm</location>
    </subcellularLocation>
</comment>
<comment type="similarity">
    <text evidence="1">Belongs to the diacylglycerol/lipid kinase family. YegS lipid kinase subfamily.</text>
</comment>
<organism>
    <name type="scientific">Stenotrophomonas maltophilia (strain K279a)</name>
    <dbReference type="NCBI Taxonomy" id="522373"/>
    <lineage>
        <taxon>Bacteria</taxon>
        <taxon>Pseudomonadati</taxon>
        <taxon>Pseudomonadota</taxon>
        <taxon>Gammaproteobacteria</taxon>
        <taxon>Lysobacterales</taxon>
        <taxon>Lysobacteraceae</taxon>
        <taxon>Stenotrophomonas</taxon>
        <taxon>Stenotrophomonas maltophilia group</taxon>
    </lineage>
</organism>
<dbReference type="EC" id="2.7.1.-" evidence="1"/>
<dbReference type="EMBL" id="AM743169">
    <property type="protein sequence ID" value="CAQ47699.1"/>
    <property type="molecule type" value="Genomic_DNA"/>
</dbReference>
<dbReference type="SMR" id="B2FKL6"/>
<dbReference type="EnsemblBacteria" id="CAQ47699">
    <property type="protein sequence ID" value="CAQ47699"/>
    <property type="gene ID" value="Smlt4314"/>
</dbReference>
<dbReference type="KEGG" id="sml:Smlt4314"/>
<dbReference type="eggNOG" id="COG1597">
    <property type="taxonomic scope" value="Bacteria"/>
</dbReference>
<dbReference type="HOGENOM" id="CLU_045532_1_1_6"/>
<dbReference type="Proteomes" id="UP000008840">
    <property type="component" value="Chromosome"/>
</dbReference>
<dbReference type="GO" id="GO:0005737">
    <property type="term" value="C:cytoplasm"/>
    <property type="evidence" value="ECO:0007669"/>
    <property type="project" value="UniProtKB-SubCell"/>
</dbReference>
<dbReference type="GO" id="GO:0005886">
    <property type="term" value="C:plasma membrane"/>
    <property type="evidence" value="ECO:0007669"/>
    <property type="project" value="TreeGrafter"/>
</dbReference>
<dbReference type="GO" id="GO:0005524">
    <property type="term" value="F:ATP binding"/>
    <property type="evidence" value="ECO:0007669"/>
    <property type="project" value="UniProtKB-UniRule"/>
</dbReference>
<dbReference type="GO" id="GO:0001727">
    <property type="term" value="F:lipid kinase activity"/>
    <property type="evidence" value="ECO:0007669"/>
    <property type="project" value="UniProtKB-UniRule"/>
</dbReference>
<dbReference type="GO" id="GO:0000287">
    <property type="term" value="F:magnesium ion binding"/>
    <property type="evidence" value="ECO:0007669"/>
    <property type="project" value="UniProtKB-UniRule"/>
</dbReference>
<dbReference type="GO" id="GO:0008654">
    <property type="term" value="P:phospholipid biosynthetic process"/>
    <property type="evidence" value="ECO:0007669"/>
    <property type="project" value="UniProtKB-UniRule"/>
</dbReference>
<dbReference type="Gene3D" id="2.60.200.40">
    <property type="match status" value="1"/>
</dbReference>
<dbReference type="Gene3D" id="3.40.50.10330">
    <property type="entry name" value="Probable inorganic polyphosphate/atp-NAD kinase, domain 1"/>
    <property type="match status" value="1"/>
</dbReference>
<dbReference type="HAMAP" id="MF_01377">
    <property type="entry name" value="YegS"/>
    <property type="match status" value="1"/>
</dbReference>
<dbReference type="InterPro" id="IPR017438">
    <property type="entry name" value="ATP-NAD_kinase_N"/>
</dbReference>
<dbReference type="InterPro" id="IPR005218">
    <property type="entry name" value="Diacylglycerol/lipid_kinase"/>
</dbReference>
<dbReference type="InterPro" id="IPR001206">
    <property type="entry name" value="Diacylglycerol_kinase_cat_dom"/>
</dbReference>
<dbReference type="InterPro" id="IPR022433">
    <property type="entry name" value="Lip_kinase_YegS"/>
</dbReference>
<dbReference type="InterPro" id="IPR050187">
    <property type="entry name" value="Lipid_Phosphate_FormReg"/>
</dbReference>
<dbReference type="InterPro" id="IPR016064">
    <property type="entry name" value="NAD/diacylglycerol_kinase_sf"/>
</dbReference>
<dbReference type="InterPro" id="IPR045540">
    <property type="entry name" value="YegS/DAGK_C"/>
</dbReference>
<dbReference type="NCBIfam" id="TIGR03702">
    <property type="entry name" value="lip_kinase_YegS"/>
    <property type="match status" value="1"/>
</dbReference>
<dbReference type="NCBIfam" id="NF009602">
    <property type="entry name" value="PRK13054.1"/>
    <property type="match status" value="1"/>
</dbReference>
<dbReference type="NCBIfam" id="TIGR00147">
    <property type="entry name" value="YegS/Rv2252/BmrU family lipid kinase"/>
    <property type="match status" value="1"/>
</dbReference>
<dbReference type="PANTHER" id="PTHR12358:SF106">
    <property type="entry name" value="LIPID KINASE YEGS"/>
    <property type="match status" value="1"/>
</dbReference>
<dbReference type="PANTHER" id="PTHR12358">
    <property type="entry name" value="SPHINGOSINE KINASE"/>
    <property type="match status" value="1"/>
</dbReference>
<dbReference type="Pfam" id="PF00781">
    <property type="entry name" value="DAGK_cat"/>
    <property type="match status" value="1"/>
</dbReference>
<dbReference type="Pfam" id="PF19279">
    <property type="entry name" value="YegS_C"/>
    <property type="match status" value="1"/>
</dbReference>
<dbReference type="SMART" id="SM00046">
    <property type="entry name" value="DAGKc"/>
    <property type="match status" value="1"/>
</dbReference>
<dbReference type="SUPFAM" id="SSF111331">
    <property type="entry name" value="NAD kinase/diacylglycerol kinase-like"/>
    <property type="match status" value="1"/>
</dbReference>
<dbReference type="PROSITE" id="PS50146">
    <property type="entry name" value="DAGK"/>
    <property type="match status" value="1"/>
</dbReference>
<sequence length="309" mass="32591">MTTPRWRLILNGKSAGNDELRDAVGHWRGQGVQLEVRVTWEDGDAERYVAEAIDHGVDVIVAAGGDGTLSAVAETLAHREELADALPSLALIPMGTANDFATAAGIPTEPKEAFALIGQATPHAIDLLRVDADGTQWWCANLASGGFGTQVTVETDAGLKKMLGGLAYVITGIAKLGRIEPITARLSGPDFAWEGDFIALGIGNGRQAGGGQQLCPQALIDDGLLDVTVLPELEGEVTATLGQMLKSGTQAALEQLATRARLPWLEIASERPLTLNLDGEPVQARQFRIECVPGRVRMHLPAGCPLLGG</sequence>
<evidence type="ECO:0000255" key="1">
    <source>
        <dbReference type="HAMAP-Rule" id="MF_01377"/>
    </source>
</evidence>
<keyword id="KW-0067">ATP-binding</keyword>
<keyword id="KW-0963">Cytoplasm</keyword>
<keyword id="KW-0418">Kinase</keyword>
<keyword id="KW-0444">Lipid biosynthesis</keyword>
<keyword id="KW-0443">Lipid metabolism</keyword>
<keyword id="KW-0460">Magnesium</keyword>
<keyword id="KW-0479">Metal-binding</keyword>
<keyword id="KW-0547">Nucleotide-binding</keyword>
<keyword id="KW-0594">Phospholipid biosynthesis</keyword>
<keyword id="KW-1208">Phospholipid metabolism</keyword>
<keyword id="KW-1185">Reference proteome</keyword>
<keyword id="KW-0808">Transferase</keyword>
<name>YEGS_STRMK</name>
<protein>
    <recommendedName>
        <fullName evidence="1">Probable lipid kinase YegS-like</fullName>
        <ecNumber evidence="1">2.7.1.-</ecNumber>
    </recommendedName>
</protein>
<accession>B2FKL6</accession>
<feature type="chain" id="PRO_1000144880" description="Probable lipid kinase YegS-like">
    <location>
        <begin position="1"/>
        <end position="309"/>
    </location>
</feature>
<feature type="domain" description="DAGKc" evidence="1">
    <location>
        <begin position="1"/>
        <end position="134"/>
    </location>
</feature>
<feature type="active site" description="Proton acceptor" evidence="1">
    <location>
        <position position="280"/>
    </location>
</feature>
<feature type="binding site" evidence="1">
    <location>
        <position position="39"/>
    </location>
    <ligand>
        <name>ATP</name>
        <dbReference type="ChEBI" id="CHEBI:30616"/>
    </ligand>
</feature>
<feature type="binding site" evidence="1">
    <location>
        <begin position="65"/>
        <end position="71"/>
    </location>
    <ligand>
        <name>ATP</name>
        <dbReference type="ChEBI" id="CHEBI:30616"/>
    </ligand>
</feature>
<feature type="binding site" evidence="1">
    <location>
        <position position="96"/>
    </location>
    <ligand>
        <name>ATP</name>
        <dbReference type="ChEBI" id="CHEBI:30616"/>
    </ligand>
</feature>
<feature type="binding site" evidence="1">
    <location>
        <position position="219"/>
    </location>
    <ligand>
        <name>Mg(2+)</name>
        <dbReference type="ChEBI" id="CHEBI:18420"/>
    </ligand>
</feature>
<feature type="binding site" evidence="1">
    <location>
        <position position="222"/>
    </location>
    <ligand>
        <name>Mg(2+)</name>
        <dbReference type="ChEBI" id="CHEBI:18420"/>
    </ligand>
</feature>
<feature type="binding site" evidence="1">
    <location>
        <position position="224"/>
    </location>
    <ligand>
        <name>Mg(2+)</name>
        <dbReference type="ChEBI" id="CHEBI:18420"/>
    </ligand>
</feature>
<reference key="1">
    <citation type="journal article" date="2008" name="Genome Biol.">
        <title>The complete genome, comparative and functional analysis of Stenotrophomonas maltophilia reveals an organism heavily shielded by drug resistance determinants.</title>
        <authorList>
            <person name="Crossman L.C."/>
            <person name="Gould V.C."/>
            <person name="Dow J.M."/>
            <person name="Vernikos G.S."/>
            <person name="Okazaki A."/>
            <person name="Sebaihia M."/>
            <person name="Saunders D."/>
            <person name="Arrowsmith C."/>
            <person name="Carver T."/>
            <person name="Peters N."/>
            <person name="Adlem E."/>
            <person name="Kerhornou A."/>
            <person name="Lord A."/>
            <person name="Murphy L."/>
            <person name="Seeger K."/>
            <person name="Squares R."/>
            <person name="Rutter S."/>
            <person name="Quail M.A."/>
            <person name="Rajandream M.A."/>
            <person name="Harris D."/>
            <person name="Churcher C."/>
            <person name="Bentley S.D."/>
            <person name="Parkhill J."/>
            <person name="Thomson N.R."/>
            <person name="Avison M.B."/>
        </authorList>
    </citation>
    <scope>NUCLEOTIDE SEQUENCE [LARGE SCALE GENOMIC DNA]</scope>
    <source>
        <strain>K279a</strain>
    </source>
</reference>
<gene>
    <name type="ordered locus">Smlt4314</name>
</gene>